<keyword id="KW-1003">Cell membrane</keyword>
<keyword id="KW-0961">Cell wall biogenesis/degradation</keyword>
<keyword id="KW-0472">Membrane</keyword>
<keyword id="KW-1185">Reference proteome</keyword>
<keyword id="KW-0812">Transmembrane</keyword>
<keyword id="KW-1133">Transmembrane helix</keyword>
<sequence length="195" mass="20399">MSTTIEIPESSKVAKGKAVAVVAPARPGGWKKGVAIMDFILRLGAIAAALGAAATMGTSDQTLPFFTQFFQFEASYDSFTTFQFFVITMSLVGGYLVLSLPFSIVAIVRPHAVGPRLFLIILDTAFLTLATAGGASAAAIVYLAHNGDQDTNWLAICNQFGDFCAQTSAAVVSSFVAVVVLVLLIIMSALAIGKP</sequence>
<comment type="function">
    <text evidence="1">Regulates membrane-cell wall junctions and localized cell wall deposition. Required for establishment of the Casparian strip membrane domain (CSD) and the subsequent formation of Casparian strips, a cell wall modification of the root endodermis that determines an apoplastic barrier between the intraorganismal apoplasm and the extraorganismal apoplasm and prevents lateral diffusion (By similarity).</text>
</comment>
<comment type="subunit">
    <text evidence="1">Homodimer and heterodimers.</text>
</comment>
<comment type="subcellular location">
    <subcellularLocation>
        <location evidence="1">Cell membrane</location>
        <topology evidence="1">Multi-pass membrane protein</topology>
    </subcellularLocation>
    <text evidence="1">Very restricted localization following a belt shape within the plasma membrane which coincides with the position of the Casparian strip membrane domain in the root endodermis.</text>
</comment>
<comment type="similarity">
    <text evidence="3">Belongs to the Casparian strip membrane proteins (CASP) family.</text>
</comment>
<organism>
    <name type="scientific">Glycine max</name>
    <name type="common">Soybean</name>
    <name type="synonym">Glycine hispida</name>
    <dbReference type="NCBI Taxonomy" id="3847"/>
    <lineage>
        <taxon>Eukaryota</taxon>
        <taxon>Viridiplantae</taxon>
        <taxon>Streptophyta</taxon>
        <taxon>Embryophyta</taxon>
        <taxon>Tracheophyta</taxon>
        <taxon>Spermatophyta</taxon>
        <taxon>Magnoliopsida</taxon>
        <taxon>eudicotyledons</taxon>
        <taxon>Gunneridae</taxon>
        <taxon>Pentapetalae</taxon>
        <taxon>rosids</taxon>
        <taxon>fabids</taxon>
        <taxon>Fabales</taxon>
        <taxon>Fabaceae</taxon>
        <taxon>Papilionoideae</taxon>
        <taxon>50 kb inversion clade</taxon>
        <taxon>NPAAA clade</taxon>
        <taxon>indigoferoid/millettioid clade</taxon>
        <taxon>Phaseoleae</taxon>
        <taxon>Glycine</taxon>
        <taxon>Glycine subgen. Soja</taxon>
    </lineage>
</organism>
<proteinExistence type="evidence at transcript level"/>
<protein>
    <recommendedName>
        <fullName>Casparian strip membrane protein 1</fullName>
        <shortName>GmCASP1</shortName>
    </recommendedName>
</protein>
<name>CASP1_SOYBN</name>
<dbReference type="EMBL" id="BT091606">
    <property type="protein sequence ID" value="ACU15802.1"/>
    <property type="molecule type" value="mRNA"/>
</dbReference>
<dbReference type="RefSeq" id="NP_001237549.1">
    <property type="nucleotide sequence ID" value="NM_001250620.2"/>
</dbReference>
<dbReference type="SMR" id="C6T2E7"/>
<dbReference type="FunCoup" id="C6T2E7">
    <property type="interactions" value="571"/>
</dbReference>
<dbReference type="PaxDb" id="3847-GLYMA02G36170.1"/>
<dbReference type="EnsemblPlants" id="KRH72259">
    <property type="protein sequence ID" value="KRH72259"/>
    <property type="gene ID" value="GLYMA_02G201100"/>
</dbReference>
<dbReference type="GeneID" id="100500661"/>
<dbReference type="Gramene" id="KRH72259">
    <property type="protein sequence ID" value="KRH72259"/>
    <property type="gene ID" value="GLYMA_02G201100"/>
</dbReference>
<dbReference type="KEGG" id="gmx:100500661"/>
<dbReference type="eggNOG" id="ENOG502QZV7">
    <property type="taxonomic scope" value="Eukaryota"/>
</dbReference>
<dbReference type="HOGENOM" id="CLU_066104_3_1_1"/>
<dbReference type="InParanoid" id="C6T2E7"/>
<dbReference type="OMA" id="VSICRPH"/>
<dbReference type="OrthoDB" id="753675at2759"/>
<dbReference type="Proteomes" id="UP000008827">
    <property type="component" value="Chromosome 2"/>
</dbReference>
<dbReference type="GO" id="GO:0048226">
    <property type="term" value="C:Casparian strip"/>
    <property type="evidence" value="ECO:0000318"/>
    <property type="project" value="GO_Central"/>
</dbReference>
<dbReference type="GO" id="GO:0005886">
    <property type="term" value="C:plasma membrane"/>
    <property type="evidence" value="ECO:0000318"/>
    <property type="project" value="GO_Central"/>
</dbReference>
<dbReference type="GO" id="GO:0042545">
    <property type="term" value="P:cell wall modification"/>
    <property type="evidence" value="ECO:0000318"/>
    <property type="project" value="GO_Central"/>
</dbReference>
<dbReference type="GO" id="GO:0007043">
    <property type="term" value="P:cell-cell junction assembly"/>
    <property type="evidence" value="ECO:0000318"/>
    <property type="project" value="GO_Central"/>
</dbReference>
<dbReference type="InterPro" id="IPR006459">
    <property type="entry name" value="CASP/CASPL"/>
</dbReference>
<dbReference type="InterPro" id="IPR006702">
    <property type="entry name" value="CASP_dom"/>
</dbReference>
<dbReference type="InterPro" id="IPR044173">
    <property type="entry name" value="CASPL"/>
</dbReference>
<dbReference type="NCBIfam" id="TIGR01569">
    <property type="entry name" value="A_tha_TIGR01569"/>
    <property type="match status" value="1"/>
</dbReference>
<dbReference type="PANTHER" id="PTHR36488:SF11">
    <property type="entry name" value="CASP-LIKE PROTEIN"/>
    <property type="match status" value="1"/>
</dbReference>
<dbReference type="PANTHER" id="PTHR36488">
    <property type="entry name" value="CASP-LIKE PROTEIN 1U1"/>
    <property type="match status" value="1"/>
</dbReference>
<dbReference type="Pfam" id="PF04535">
    <property type="entry name" value="CASP_dom"/>
    <property type="match status" value="1"/>
</dbReference>
<reference key="1">
    <citation type="submission" date="2009-08" db="EMBL/GenBank/DDBJ databases">
        <authorList>
            <person name="Cheung F."/>
            <person name="Xiao Y."/>
            <person name="Chan A."/>
            <person name="Moskal W."/>
            <person name="Town C.D."/>
        </authorList>
    </citation>
    <scope>NUCLEOTIDE SEQUENCE [LARGE SCALE MRNA]</scope>
</reference>
<reference key="2">
    <citation type="journal article" date="2014" name="Plant Physiol.">
        <title>Functional and evolutionary analysis of the CASPARIAN STRIP MEMBRANE DOMAIN PROTEIN family.</title>
        <authorList>
            <person name="Roppolo D."/>
            <person name="Boeckmann B."/>
            <person name="Pfister A."/>
            <person name="Boutet E."/>
            <person name="Rubio M.C."/>
            <person name="Denervaud-Tendon V."/>
            <person name="Vermeer J.E."/>
            <person name="Gheyselinck J."/>
            <person name="Xenarios I."/>
            <person name="Geldner N."/>
        </authorList>
    </citation>
    <scope>GENE FAMILY</scope>
    <scope>NOMENCLATURE</scope>
</reference>
<feature type="chain" id="PRO_0000391523" description="Casparian strip membrane protein 1">
    <location>
        <begin position="1"/>
        <end position="195"/>
    </location>
</feature>
<feature type="topological domain" description="Cytoplasmic" evidence="2">
    <location>
        <begin position="1"/>
        <end position="33"/>
    </location>
</feature>
<feature type="transmembrane region" description="Helical" evidence="2">
    <location>
        <begin position="34"/>
        <end position="54"/>
    </location>
</feature>
<feature type="topological domain" description="Extracellular" evidence="2">
    <location>
        <begin position="55"/>
        <end position="83"/>
    </location>
</feature>
<feature type="transmembrane region" description="Helical" evidence="2">
    <location>
        <begin position="84"/>
        <end position="104"/>
    </location>
</feature>
<feature type="topological domain" description="Cytoplasmic" evidence="2">
    <location>
        <begin position="105"/>
        <end position="116"/>
    </location>
</feature>
<feature type="transmembrane region" description="Helical" evidence="2">
    <location>
        <begin position="117"/>
        <end position="137"/>
    </location>
</feature>
<feature type="topological domain" description="Extracellular" evidence="2">
    <location>
        <begin position="138"/>
        <end position="171"/>
    </location>
</feature>
<feature type="transmembrane region" description="Helical" evidence="2">
    <location>
        <begin position="172"/>
        <end position="192"/>
    </location>
</feature>
<feature type="topological domain" description="Cytoplasmic" evidence="2">
    <location>
        <begin position="193"/>
        <end position="195"/>
    </location>
</feature>
<evidence type="ECO:0000250" key="1"/>
<evidence type="ECO:0000255" key="2"/>
<evidence type="ECO:0000305" key="3"/>
<accession>C6T2E7</accession>